<evidence type="ECO:0000255" key="1">
    <source>
        <dbReference type="HAMAP-Rule" id="MF_01367"/>
    </source>
</evidence>
<evidence type="ECO:0000305" key="2"/>
<dbReference type="EMBL" id="BA000001">
    <property type="protein sequence ID" value="BAA30883.1"/>
    <property type="status" value="ALT_INIT"/>
    <property type="molecule type" value="Genomic_DNA"/>
</dbReference>
<dbReference type="PIR" id="D71186">
    <property type="entry name" value="D71186"/>
</dbReference>
<dbReference type="RefSeq" id="WP_010885830.1">
    <property type="nucleotide sequence ID" value="NC_000961.1"/>
</dbReference>
<dbReference type="SMR" id="O59427"/>
<dbReference type="STRING" id="70601.gene:9378766"/>
<dbReference type="EnsemblBacteria" id="BAA30883">
    <property type="protein sequence ID" value="BAA30883"/>
    <property type="gene ID" value="BAA30883"/>
</dbReference>
<dbReference type="GeneID" id="1442612"/>
<dbReference type="KEGG" id="pho:PH1768"/>
<dbReference type="eggNOG" id="arCOG04095">
    <property type="taxonomic scope" value="Archaea"/>
</dbReference>
<dbReference type="OrthoDB" id="23569at2157"/>
<dbReference type="Proteomes" id="UP000000752">
    <property type="component" value="Chromosome"/>
</dbReference>
<dbReference type="GO" id="GO:0022625">
    <property type="term" value="C:cytosolic large ribosomal subunit"/>
    <property type="evidence" value="ECO:0007669"/>
    <property type="project" value="TreeGrafter"/>
</dbReference>
<dbReference type="GO" id="GO:0070180">
    <property type="term" value="F:large ribosomal subunit rRNA binding"/>
    <property type="evidence" value="ECO:0007669"/>
    <property type="project" value="TreeGrafter"/>
</dbReference>
<dbReference type="GO" id="GO:0003735">
    <property type="term" value="F:structural constituent of ribosome"/>
    <property type="evidence" value="ECO:0007669"/>
    <property type="project" value="InterPro"/>
</dbReference>
<dbReference type="GO" id="GO:0006412">
    <property type="term" value="P:translation"/>
    <property type="evidence" value="ECO:0007669"/>
    <property type="project" value="UniProtKB-UniRule"/>
</dbReference>
<dbReference type="CDD" id="cd00337">
    <property type="entry name" value="Ribosomal_uL14"/>
    <property type="match status" value="1"/>
</dbReference>
<dbReference type="FunFam" id="2.40.150.20:FF:000007">
    <property type="entry name" value="50S ribosomal protein L14"/>
    <property type="match status" value="1"/>
</dbReference>
<dbReference type="Gene3D" id="2.40.150.20">
    <property type="entry name" value="Ribosomal protein L14"/>
    <property type="match status" value="1"/>
</dbReference>
<dbReference type="HAMAP" id="MF_01367">
    <property type="entry name" value="Ribosomal_uL14"/>
    <property type="match status" value="1"/>
</dbReference>
<dbReference type="InterPro" id="IPR000218">
    <property type="entry name" value="Ribosomal_uL14"/>
</dbReference>
<dbReference type="InterPro" id="IPR019971">
    <property type="entry name" value="Ribosomal_uL14_arc"/>
</dbReference>
<dbReference type="InterPro" id="IPR019972">
    <property type="entry name" value="Ribosomal_uL14_CS"/>
</dbReference>
<dbReference type="InterPro" id="IPR036853">
    <property type="entry name" value="Ribosomal_uL14_sf"/>
</dbReference>
<dbReference type="NCBIfam" id="NF006344">
    <property type="entry name" value="PRK08571.1"/>
    <property type="match status" value="1"/>
</dbReference>
<dbReference type="NCBIfam" id="TIGR03673">
    <property type="entry name" value="uL14_arch"/>
    <property type="match status" value="1"/>
</dbReference>
<dbReference type="PANTHER" id="PTHR11761">
    <property type="entry name" value="50S/60S RIBOSOMAL PROTEIN L14/L23"/>
    <property type="match status" value="1"/>
</dbReference>
<dbReference type="PANTHER" id="PTHR11761:SF8">
    <property type="entry name" value="LARGE RIBOSOMAL SUBUNIT PROTEIN UL14"/>
    <property type="match status" value="1"/>
</dbReference>
<dbReference type="Pfam" id="PF00238">
    <property type="entry name" value="Ribosomal_L14"/>
    <property type="match status" value="1"/>
</dbReference>
<dbReference type="SMART" id="SM01374">
    <property type="entry name" value="Ribosomal_L14"/>
    <property type="match status" value="1"/>
</dbReference>
<dbReference type="SUPFAM" id="SSF50193">
    <property type="entry name" value="Ribosomal protein L14"/>
    <property type="match status" value="1"/>
</dbReference>
<dbReference type="PROSITE" id="PS00049">
    <property type="entry name" value="RIBOSOMAL_L14"/>
    <property type="match status" value="1"/>
</dbReference>
<accession>O59427</accession>
<organism>
    <name type="scientific">Pyrococcus horikoshii (strain ATCC 700860 / DSM 12428 / JCM 9974 / NBRC 100139 / OT-3)</name>
    <dbReference type="NCBI Taxonomy" id="70601"/>
    <lineage>
        <taxon>Archaea</taxon>
        <taxon>Methanobacteriati</taxon>
        <taxon>Methanobacteriota</taxon>
        <taxon>Thermococci</taxon>
        <taxon>Thermococcales</taxon>
        <taxon>Thermococcaceae</taxon>
        <taxon>Pyrococcus</taxon>
    </lineage>
</organism>
<comment type="function">
    <text evidence="1">Binds to 23S rRNA. Forms part of two intersubunit bridges in the 70S ribosome.</text>
</comment>
<comment type="subunit">
    <text evidence="1">Part of the 50S ribosomal subunit. Forms a cluster with proteins L3 and L24e, part of which may contact the 16S rRNA in 2 intersubunit bridges.</text>
</comment>
<comment type="similarity">
    <text evidence="1">Belongs to the universal ribosomal protein uL14 family.</text>
</comment>
<comment type="sequence caution" evidence="2">
    <conflict type="erroneous initiation">
        <sequence resource="EMBL-CDS" id="BAA30883"/>
    </conflict>
</comment>
<sequence>MAKKGAGATRGISPVRPTRAIPIGAYLTVADNSGAKVIQVIGVVEYHGTRRRLASAGVGDMVVATVKKGRPDMRHQVVRAVIIRQRKEYRRLDGMRVKFEDNAAVIVTPEGVPRGTEIRGPVAREAAEKWVRIGSIASIIV</sequence>
<proteinExistence type="inferred from homology"/>
<gene>
    <name evidence="1" type="primary">rpl14</name>
    <name type="ordered locus">PH1768</name>
</gene>
<feature type="chain" id="PRO_0000128577" description="Large ribosomal subunit protein uL14">
    <location>
        <begin position="1"/>
        <end position="141"/>
    </location>
</feature>
<keyword id="KW-0687">Ribonucleoprotein</keyword>
<keyword id="KW-0689">Ribosomal protein</keyword>
<keyword id="KW-0694">RNA-binding</keyword>
<keyword id="KW-0699">rRNA-binding</keyword>
<name>RL14_PYRHO</name>
<protein>
    <recommendedName>
        <fullName evidence="1">Large ribosomal subunit protein uL14</fullName>
    </recommendedName>
    <alternativeName>
        <fullName evidence="2">50S ribosomal protein L14</fullName>
    </alternativeName>
</protein>
<reference key="1">
    <citation type="journal article" date="1998" name="DNA Res.">
        <title>Complete sequence and gene organization of the genome of a hyper-thermophilic archaebacterium, Pyrococcus horikoshii OT3.</title>
        <authorList>
            <person name="Kawarabayasi Y."/>
            <person name="Sawada M."/>
            <person name="Horikawa H."/>
            <person name="Haikawa Y."/>
            <person name="Hino Y."/>
            <person name="Yamamoto S."/>
            <person name="Sekine M."/>
            <person name="Baba S."/>
            <person name="Kosugi H."/>
            <person name="Hosoyama A."/>
            <person name="Nagai Y."/>
            <person name="Sakai M."/>
            <person name="Ogura K."/>
            <person name="Otsuka R."/>
            <person name="Nakazawa H."/>
            <person name="Takamiya M."/>
            <person name="Ohfuku Y."/>
            <person name="Funahashi T."/>
            <person name="Tanaka T."/>
            <person name="Kudoh Y."/>
            <person name="Yamazaki J."/>
            <person name="Kushida N."/>
            <person name="Oguchi A."/>
            <person name="Aoki K."/>
            <person name="Yoshizawa T."/>
            <person name="Nakamura Y."/>
            <person name="Robb F.T."/>
            <person name="Horikoshi K."/>
            <person name="Masuchi Y."/>
            <person name="Shizuya H."/>
            <person name="Kikuchi H."/>
        </authorList>
    </citation>
    <scope>NUCLEOTIDE SEQUENCE [LARGE SCALE GENOMIC DNA]</scope>
    <source>
        <strain>ATCC 700860 / DSM 12428 / JCM 9974 / NBRC 100139 / OT-3</strain>
    </source>
</reference>